<feature type="chain" id="PRO_0000334910" description="Ribonuclease HII">
    <location>
        <begin position="1"/>
        <end position="252"/>
    </location>
</feature>
<feature type="domain" description="RNase H type-2" evidence="2">
    <location>
        <begin position="68"/>
        <end position="252"/>
    </location>
</feature>
<feature type="binding site" evidence="1">
    <location>
        <position position="74"/>
    </location>
    <ligand>
        <name>a divalent metal cation</name>
        <dbReference type="ChEBI" id="CHEBI:60240"/>
    </ligand>
</feature>
<feature type="binding site" evidence="1">
    <location>
        <position position="75"/>
    </location>
    <ligand>
        <name>a divalent metal cation</name>
        <dbReference type="ChEBI" id="CHEBI:60240"/>
    </ligand>
</feature>
<feature type="binding site" evidence="1">
    <location>
        <position position="165"/>
    </location>
    <ligand>
        <name>a divalent metal cation</name>
        <dbReference type="ChEBI" id="CHEBI:60240"/>
    </ligand>
</feature>
<evidence type="ECO:0000255" key="1">
    <source>
        <dbReference type="HAMAP-Rule" id="MF_00052"/>
    </source>
</evidence>
<evidence type="ECO:0000255" key="2">
    <source>
        <dbReference type="PROSITE-ProRule" id="PRU01319"/>
    </source>
</evidence>
<gene>
    <name evidence="1" type="primary">rnhB</name>
    <name type="ordered locus">LSEI_1398</name>
</gene>
<comment type="function">
    <text evidence="1">Endonuclease that specifically degrades the RNA of RNA-DNA hybrids.</text>
</comment>
<comment type="catalytic activity">
    <reaction evidence="1">
        <text>Endonucleolytic cleavage to 5'-phosphomonoester.</text>
        <dbReference type="EC" id="3.1.26.4"/>
    </reaction>
</comment>
<comment type="cofactor">
    <cofactor evidence="1">
        <name>Mn(2+)</name>
        <dbReference type="ChEBI" id="CHEBI:29035"/>
    </cofactor>
    <cofactor evidence="1">
        <name>Mg(2+)</name>
        <dbReference type="ChEBI" id="CHEBI:18420"/>
    </cofactor>
    <text evidence="1">Manganese or magnesium. Binds 1 divalent metal ion per monomer in the absence of substrate. May bind a second metal ion after substrate binding.</text>
</comment>
<comment type="subcellular location">
    <subcellularLocation>
        <location evidence="1">Cytoplasm</location>
    </subcellularLocation>
</comment>
<comment type="similarity">
    <text evidence="1">Belongs to the RNase HII family.</text>
</comment>
<organism>
    <name type="scientific">Lacticaseibacillus paracasei (strain ATCC 334 / BCRC 17002 / CCUG 31169 / CIP 107868 / KCTC 3260 / NRRL B-441)</name>
    <name type="common">Lactobacillus paracasei</name>
    <dbReference type="NCBI Taxonomy" id="321967"/>
    <lineage>
        <taxon>Bacteria</taxon>
        <taxon>Bacillati</taxon>
        <taxon>Bacillota</taxon>
        <taxon>Bacilli</taxon>
        <taxon>Lactobacillales</taxon>
        <taxon>Lactobacillaceae</taxon>
        <taxon>Lacticaseibacillus</taxon>
    </lineage>
</organism>
<dbReference type="EC" id="3.1.26.4" evidence="1"/>
<dbReference type="EMBL" id="CP000423">
    <property type="protein sequence ID" value="ABJ70176.1"/>
    <property type="molecule type" value="Genomic_DNA"/>
</dbReference>
<dbReference type="RefSeq" id="WP_003575040.1">
    <property type="nucleotide sequence ID" value="NC_008526.1"/>
</dbReference>
<dbReference type="RefSeq" id="YP_806618.1">
    <property type="nucleotide sequence ID" value="NC_008526.1"/>
</dbReference>
<dbReference type="SMR" id="Q039E6"/>
<dbReference type="STRING" id="321967.LSEI_1398"/>
<dbReference type="PaxDb" id="321967-LSEI_1398"/>
<dbReference type="KEGG" id="lca:LSEI_1398"/>
<dbReference type="PATRIC" id="fig|321967.11.peg.1377"/>
<dbReference type="HOGENOM" id="CLU_036532_2_1_9"/>
<dbReference type="Proteomes" id="UP000001651">
    <property type="component" value="Chromosome"/>
</dbReference>
<dbReference type="GO" id="GO:0005737">
    <property type="term" value="C:cytoplasm"/>
    <property type="evidence" value="ECO:0007669"/>
    <property type="project" value="UniProtKB-SubCell"/>
</dbReference>
<dbReference type="GO" id="GO:0032299">
    <property type="term" value="C:ribonuclease H2 complex"/>
    <property type="evidence" value="ECO:0007669"/>
    <property type="project" value="TreeGrafter"/>
</dbReference>
<dbReference type="GO" id="GO:0030145">
    <property type="term" value="F:manganese ion binding"/>
    <property type="evidence" value="ECO:0007669"/>
    <property type="project" value="UniProtKB-UniRule"/>
</dbReference>
<dbReference type="GO" id="GO:0003723">
    <property type="term" value="F:RNA binding"/>
    <property type="evidence" value="ECO:0007669"/>
    <property type="project" value="InterPro"/>
</dbReference>
<dbReference type="GO" id="GO:0004523">
    <property type="term" value="F:RNA-DNA hybrid ribonuclease activity"/>
    <property type="evidence" value="ECO:0007669"/>
    <property type="project" value="UniProtKB-UniRule"/>
</dbReference>
<dbReference type="GO" id="GO:0043137">
    <property type="term" value="P:DNA replication, removal of RNA primer"/>
    <property type="evidence" value="ECO:0007669"/>
    <property type="project" value="TreeGrafter"/>
</dbReference>
<dbReference type="GO" id="GO:0006298">
    <property type="term" value="P:mismatch repair"/>
    <property type="evidence" value="ECO:0007669"/>
    <property type="project" value="TreeGrafter"/>
</dbReference>
<dbReference type="CDD" id="cd07182">
    <property type="entry name" value="RNase_HII_bacteria_HII_like"/>
    <property type="match status" value="1"/>
</dbReference>
<dbReference type="FunFam" id="3.30.420.10:FF:000006">
    <property type="entry name" value="Ribonuclease HII"/>
    <property type="match status" value="1"/>
</dbReference>
<dbReference type="Gene3D" id="3.30.420.10">
    <property type="entry name" value="Ribonuclease H-like superfamily/Ribonuclease H"/>
    <property type="match status" value="1"/>
</dbReference>
<dbReference type="HAMAP" id="MF_00052_B">
    <property type="entry name" value="RNase_HII_B"/>
    <property type="match status" value="1"/>
</dbReference>
<dbReference type="InterPro" id="IPR022898">
    <property type="entry name" value="RNase_HII"/>
</dbReference>
<dbReference type="InterPro" id="IPR001352">
    <property type="entry name" value="RNase_HII/HIII"/>
</dbReference>
<dbReference type="InterPro" id="IPR024567">
    <property type="entry name" value="RNase_HII/HIII_dom"/>
</dbReference>
<dbReference type="InterPro" id="IPR012337">
    <property type="entry name" value="RNaseH-like_sf"/>
</dbReference>
<dbReference type="InterPro" id="IPR036397">
    <property type="entry name" value="RNaseH_sf"/>
</dbReference>
<dbReference type="NCBIfam" id="NF000594">
    <property type="entry name" value="PRK00015.1-1"/>
    <property type="match status" value="1"/>
</dbReference>
<dbReference type="NCBIfam" id="NF000595">
    <property type="entry name" value="PRK00015.1-3"/>
    <property type="match status" value="1"/>
</dbReference>
<dbReference type="PANTHER" id="PTHR10954">
    <property type="entry name" value="RIBONUCLEASE H2 SUBUNIT A"/>
    <property type="match status" value="1"/>
</dbReference>
<dbReference type="PANTHER" id="PTHR10954:SF18">
    <property type="entry name" value="RIBONUCLEASE HII"/>
    <property type="match status" value="1"/>
</dbReference>
<dbReference type="Pfam" id="PF01351">
    <property type="entry name" value="RNase_HII"/>
    <property type="match status" value="1"/>
</dbReference>
<dbReference type="SUPFAM" id="SSF53098">
    <property type="entry name" value="Ribonuclease H-like"/>
    <property type="match status" value="1"/>
</dbReference>
<dbReference type="PROSITE" id="PS51975">
    <property type="entry name" value="RNASE_H_2"/>
    <property type="match status" value="1"/>
</dbReference>
<name>RNH2_LACP3</name>
<proteinExistence type="inferred from homology"/>
<keyword id="KW-0963">Cytoplasm</keyword>
<keyword id="KW-0255">Endonuclease</keyword>
<keyword id="KW-0378">Hydrolase</keyword>
<keyword id="KW-0464">Manganese</keyword>
<keyword id="KW-0479">Metal-binding</keyword>
<keyword id="KW-0540">Nuclease</keyword>
<keyword id="KW-1185">Reference proteome</keyword>
<accession>Q039E6</accession>
<reference key="1">
    <citation type="journal article" date="2006" name="Proc. Natl. Acad. Sci. U.S.A.">
        <title>Comparative genomics of the lactic acid bacteria.</title>
        <authorList>
            <person name="Makarova K.S."/>
            <person name="Slesarev A."/>
            <person name="Wolf Y.I."/>
            <person name="Sorokin A."/>
            <person name="Mirkin B."/>
            <person name="Koonin E.V."/>
            <person name="Pavlov A."/>
            <person name="Pavlova N."/>
            <person name="Karamychev V."/>
            <person name="Polouchine N."/>
            <person name="Shakhova V."/>
            <person name="Grigoriev I."/>
            <person name="Lou Y."/>
            <person name="Rohksar D."/>
            <person name="Lucas S."/>
            <person name="Huang K."/>
            <person name="Goodstein D.M."/>
            <person name="Hawkins T."/>
            <person name="Plengvidhya V."/>
            <person name="Welker D."/>
            <person name="Hughes J."/>
            <person name="Goh Y."/>
            <person name="Benson A."/>
            <person name="Baldwin K."/>
            <person name="Lee J.-H."/>
            <person name="Diaz-Muniz I."/>
            <person name="Dosti B."/>
            <person name="Smeianov V."/>
            <person name="Wechter W."/>
            <person name="Barabote R."/>
            <person name="Lorca G."/>
            <person name="Altermann E."/>
            <person name="Barrangou R."/>
            <person name="Ganesan B."/>
            <person name="Xie Y."/>
            <person name="Rawsthorne H."/>
            <person name="Tamir D."/>
            <person name="Parker C."/>
            <person name="Breidt F."/>
            <person name="Broadbent J.R."/>
            <person name="Hutkins R."/>
            <person name="O'Sullivan D."/>
            <person name="Steele J."/>
            <person name="Unlu G."/>
            <person name="Saier M.H. Jr."/>
            <person name="Klaenhammer T."/>
            <person name="Richardson P."/>
            <person name="Kozyavkin S."/>
            <person name="Weimer B.C."/>
            <person name="Mills D.A."/>
        </authorList>
    </citation>
    <scope>NUCLEOTIDE SEQUENCE [LARGE SCALE GENOMIC DNA]</scope>
    <source>
        <strain>ATCC 334 / BCRC 17002 / CCUG 31169 / CIP 107868 / KCTC 3260 / NRRL B-441</strain>
    </source>
</reference>
<protein>
    <recommendedName>
        <fullName evidence="1">Ribonuclease HII</fullName>
        <shortName evidence="1">RNase HII</shortName>
        <ecNumber evidence="1">3.1.26.4</ecNumber>
    </recommendedName>
</protein>
<sequence length="252" mass="27848">MPTLSEYKALLAADEVAPAILAALKEDSRIGAGKLLAAYQRRQAHQAAEEVALRYRSRYERQLWGTYEYVAGLDEVGRGPLAGPVVTAAVILPHHFQWPVNDSKQLTAHERNVLYPHILTEAIAVGIGVADNRTIDRENIYHATELAMAQAVDHLRVAPECLLVDAMHVPVDLPQKRLIKGDANSISIAAASIVAKVIRDRLMMMYDKIYPGYDFKDNMGYGTKAHLAGLAAHGVTPIHRRSFGPVRDRLRS</sequence>